<accession>B1X4Z7</accession>
<sequence>MAIIIPKVKTNGRIKMRIRKGDIIQVISGKDKGKIGEVLRTLPNENRLIVEGVNLRTRHVKPTSGGESGRIVTKEAYLHASNVMAYSTENKVASRIEIMVDSDGNRKRRLKKTGEILA</sequence>
<keyword id="KW-0994">Organellar chromatophore</keyword>
<keyword id="KW-0934">Plastid</keyword>
<keyword id="KW-0687">Ribonucleoprotein</keyword>
<keyword id="KW-0689">Ribosomal protein</keyword>
<keyword id="KW-0694">RNA-binding</keyword>
<keyword id="KW-0699">rRNA-binding</keyword>
<geneLocation type="organellar chromatophore"/>
<feature type="chain" id="PRO_0000355742" description="Large ribosomal subunit protein uL24c">
    <location>
        <begin position="1"/>
        <end position="118"/>
    </location>
</feature>
<dbReference type="EMBL" id="CP000815">
    <property type="protein sequence ID" value="ACB43016.1"/>
    <property type="molecule type" value="Genomic_DNA"/>
</dbReference>
<dbReference type="RefSeq" id="YP_002049226.1">
    <property type="nucleotide sequence ID" value="NC_011087.1"/>
</dbReference>
<dbReference type="SMR" id="B1X4Z7"/>
<dbReference type="GeneID" id="6481800"/>
<dbReference type="GO" id="GO:0070111">
    <property type="term" value="C:organellar chromatophore"/>
    <property type="evidence" value="ECO:0007669"/>
    <property type="project" value="UniProtKB-SubCell"/>
</dbReference>
<dbReference type="GO" id="GO:0009536">
    <property type="term" value="C:plastid"/>
    <property type="evidence" value="ECO:0007669"/>
    <property type="project" value="UniProtKB-KW"/>
</dbReference>
<dbReference type="GO" id="GO:1990904">
    <property type="term" value="C:ribonucleoprotein complex"/>
    <property type="evidence" value="ECO:0007669"/>
    <property type="project" value="UniProtKB-KW"/>
</dbReference>
<dbReference type="GO" id="GO:0005840">
    <property type="term" value="C:ribosome"/>
    <property type="evidence" value="ECO:0007669"/>
    <property type="project" value="UniProtKB-KW"/>
</dbReference>
<dbReference type="GO" id="GO:0019843">
    <property type="term" value="F:rRNA binding"/>
    <property type="evidence" value="ECO:0007669"/>
    <property type="project" value="UniProtKB-KW"/>
</dbReference>
<dbReference type="GO" id="GO:0003735">
    <property type="term" value="F:structural constituent of ribosome"/>
    <property type="evidence" value="ECO:0007669"/>
    <property type="project" value="InterPro"/>
</dbReference>
<dbReference type="GO" id="GO:0006412">
    <property type="term" value="P:translation"/>
    <property type="evidence" value="ECO:0007669"/>
    <property type="project" value="InterPro"/>
</dbReference>
<dbReference type="CDD" id="cd06089">
    <property type="entry name" value="KOW_RPL26"/>
    <property type="match status" value="1"/>
</dbReference>
<dbReference type="Gene3D" id="2.30.30.30">
    <property type="match status" value="1"/>
</dbReference>
<dbReference type="HAMAP" id="MF_01326_B">
    <property type="entry name" value="Ribosomal_uL24_B"/>
    <property type="match status" value="1"/>
</dbReference>
<dbReference type="InterPro" id="IPR005824">
    <property type="entry name" value="KOW"/>
</dbReference>
<dbReference type="InterPro" id="IPR014722">
    <property type="entry name" value="Rib_uL2_dom2"/>
</dbReference>
<dbReference type="InterPro" id="IPR003256">
    <property type="entry name" value="Ribosomal_uL24"/>
</dbReference>
<dbReference type="InterPro" id="IPR005825">
    <property type="entry name" value="Ribosomal_uL24_CS"/>
</dbReference>
<dbReference type="InterPro" id="IPR041988">
    <property type="entry name" value="Ribosomal_uL24_KOW"/>
</dbReference>
<dbReference type="InterPro" id="IPR008991">
    <property type="entry name" value="Translation_prot_SH3-like_sf"/>
</dbReference>
<dbReference type="NCBIfam" id="TIGR01079">
    <property type="entry name" value="rplX_bact"/>
    <property type="match status" value="1"/>
</dbReference>
<dbReference type="PANTHER" id="PTHR12903">
    <property type="entry name" value="MITOCHONDRIAL RIBOSOMAL PROTEIN L24"/>
    <property type="match status" value="1"/>
</dbReference>
<dbReference type="Pfam" id="PF00467">
    <property type="entry name" value="KOW"/>
    <property type="match status" value="1"/>
</dbReference>
<dbReference type="Pfam" id="PF17136">
    <property type="entry name" value="ribosomal_L24"/>
    <property type="match status" value="1"/>
</dbReference>
<dbReference type="SMART" id="SM00739">
    <property type="entry name" value="KOW"/>
    <property type="match status" value="1"/>
</dbReference>
<dbReference type="SUPFAM" id="SSF50104">
    <property type="entry name" value="Translation proteins SH3-like domain"/>
    <property type="match status" value="1"/>
</dbReference>
<dbReference type="PROSITE" id="PS01108">
    <property type="entry name" value="RIBOSOMAL_L24"/>
    <property type="match status" value="1"/>
</dbReference>
<evidence type="ECO:0000250" key="1"/>
<evidence type="ECO:0000305" key="2"/>
<reference key="1">
    <citation type="journal article" date="2008" name="Curr. Biol.">
        <title>Chromatophore genome sequence of Paulinella sheds light on acquisition of photosynthesis by eukaryotes.</title>
        <authorList>
            <person name="Nowack E.C.M."/>
            <person name="Melkonian M."/>
            <person name="Gloeckner G."/>
        </authorList>
    </citation>
    <scope>NUCLEOTIDE SEQUENCE [LARGE SCALE GENOMIC DNA]</scope>
</reference>
<organism>
    <name type="scientific">Paulinella chromatophora</name>
    <dbReference type="NCBI Taxonomy" id="39717"/>
    <lineage>
        <taxon>Eukaryota</taxon>
        <taxon>Sar</taxon>
        <taxon>Rhizaria</taxon>
        <taxon>Cercozoa</taxon>
        <taxon>Imbricatea</taxon>
        <taxon>Silicofilosea</taxon>
        <taxon>Euglyphida</taxon>
        <taxon>Paulinellidae</taxon>
        <taxon>Paulinella</taxon>
    </lineage>
</organism>
<protein>
    <recommendedName>
        <fullName evidence="2">Large ribosomal subunit protein uL24c</fullName>
    </recommendedName>
    <alternativeName>
        <fullName>50S ribosomal protein L24, organellar chromatophore</fullName>
    </alternativeName>
</protein>
<gene>
    <name type="primary">rpl24</name>
    <name type="ordered locus">PCC_0586</name>
</gene>
<comment type="function">
    <text evidence="1">One of two assembly initiator proteins, it binds directly to the 5'-end of the 23S rRNA, where it nucleates assembly of the 50S subunit.</text>
</comment>
<comment type="subunit">
    <text evidence="1">Part of the 50S ribosomal subunit.</text>
</comment>
<comment type="subcellular location">
    <subcellularLocation>
        <location>Plastid</location>
        <location>Organellar chromatophore</location>
    </subcellularLocation>
</comment>
<comment type="similarity">
    <text evidence="2">Belongs to the universal ribosomal protein uL24 family.</text>
</comment>
<proteinExistence type="inferred from homology"/>
<name>RK24_PAUCH</name>